<gene>
    <name evidence="1" type="primary">rpsT</name>
    <name type="ordered locus">LAF_0613</name>
</gene>
<proteinExistence type="inferred from homology"/>
<name>RS20_LIMF3</name>
<evidence type="ECO:0000255" key="1">
    <source>
        <dbReference type="HAMAP-Rule" id="MF_00500"/>
    </source>
</evidence>
<evidence type="ECO:0000305" key="2"/>
<accession>B2GBB7</accession>
<protein>
    <recommendedName>
        <fullName evidence="1">Small ribosomal subunit protein bS20</fullName>
    </recommendedName>
    <alternativeName>
        <fullName evidence="2">30S ribosomal protein S20</fullName>
    </alternativeName>
</protein>
<comment type="function">
    <text evidence="1">Binds directly to 16S ribosomal RNA.</text>
</comment>
<comment type="similarity">
    <text evidence="1">Belongs to the bacterial ribosomal protein bS20 family.</text>
</comment>
<reference key="1">
    <citation type="journal article" date="2008" name="DNA Res.">
        <title>Comparative genome analysis of Lactobacillus reuteri and Lactobacillus fermentum reveal a genomic island for reuterin and cobalamin production.</title>
        <authorList>
            <person name="Morita H."/>
            <person name="Toh H."/>
            <person name="Fukuda S."/>
            <person name="Horikawa H."/>
            <person name="Oshima K."/>
            <person name="Suzuki T."/>
            <person name="Murakami M."/>
            <person name="Hisamatsu S."/>
            <person name="Kato Y."/>
            <person name="Takizawa T."/>
            <person name="Fukuoka H."/>
            <person name="Yoshimura T."/>
            <person name="Itoh K."/>
            <person name="O'Sullivan D.J."/>
            <person name="McKay L.L."/>
            <person name="Ohno H."/>
            <person name="Kikuchi J."/>
            <person name="Masaoka T."/>
            <person name="Hattori M."/>
        </authorList>
    </citation>
    <scope>NUCLEOTIDE SEQUENCE [LARGE SCALE GENOMIC DNA]</scope>
    <source>
        <strain>NBRC 3956 / LMG 18251</strain>
    </source>
</reference>
<organism>
    <name type="scientific">Limosilactobacillus fermentum (strain NBRC 3956 / LMG 18251)</name>
    <name type="common">Lactobacillus fermentum</name>
    <dbReference type="NCBI Taxonomy" id="334390"/>
    <lineage>
        <taxon>Bacteria</taxon>
        <taxon>Bacillati</taxon>
        <taxon>Bacillota</taxon>
        <taxon>Bacilli</taxon>
        <taxon>Lactobacillales</taxon>
        <taxon>Lactobacillaceae</taxon>
        <taxon>Limosilactobacillus</taxon>
    </lineage>
</organism>
<feature type="chain" id="PRO_1000126464" description="Small ribosomal subunit protein bS20">
    <location>
        <begin position="1"/>
        <end position="84"/>
    </location>
</feature>
<sequence>MPIIKSAIERVRVNEKAAARNASQMSAMRTAIKKFDKAKLAGADNLDDLYKAAISAIDHAHSKGLIKANKAARDKSRLSARYAK</sequence>
<dbReference type="EMBL" id="AP008937">
    <property type="protein sequence ID" value="BAG26949.1"/>
    <property type="molecule type" value="Genomic_DNA"/>
</dbReference>
<dbReference type="RefSeq" id="WP_003682071.1">
    <property type="nucleotide sequence ID" value="NC_010610.1"/>
</dbReference>
<dbReference type="SMR" id="B2GBB7"/>
<dbReference type="GeneID" id="83715054"/>
<dbReference type="KEGG" id="lfe:LAF_0613"/>
<dbReference type="eggNOG" id="COG0268">
    <property type="taxonomic scope" value="Bacteria"/>
</dbReference>
<dbReference type="HOGENOM" id="CLU_160655_1_1_9"/>
<dbReference type="Proteomes" id="UP000001697">
    <property type="component" value="Chromosome"/>
</dbReference>
<dbReference type="GO" id="GO:0005829">
    <property type="term" value="C:cytosol"/>
    <property type="evidence" value="ECO:0007669"/>
    <property type="project" value="TreeGrafter"/>
</dbReference>
<dbReference type="GO" id="GO:0015935">
    <property type="term" value="C:small ribosomal subunit"/>
    <property type="evidence" value="ECO:0007669"/>
    <property type="project" value="TreeGrafter"/>
</dbReference>
<dbReference type="GO" id="GO:0070181">
    <property type="term" value="F:small ribosomal subunit rRNA binding"/>
    <property type="evidence" value="ECO:0007669"/>
    <property type="project" value="TreeGrafter"/>
</dbReference>
<dbReference type="GO" id="GO:0003735">
    <property type="term" value="F:structural constituent of ribosome"/>
    <property type="evidence" value="ECO:0007669"/>
    <property type="project" value="InterPro"/>
</dbReference>
<dbReference type="GO" id="GO:0006412">
    <property type="term" value="P:translation"/>
    <property type="evidence" value="ECO:0007669"/>
    <property type="project" value="UniProtKB-UniRule"/>
</dbReference>
<dbReference type="Gene3D" id="1.20.58.110">
    <property type="entry name" value="Ribosomal protein S20"/>
    <property type="match status" value="1"/>
</dbReference>
<dbReference type="HAMAP" id="MF_00500">
    <property type="entry name" value="Ribosomal_bS20"/>
    <property type="match status" value="1"/>
</dbReference>
<dbReference type="InterPro" id="IPR002583">
    <property type="entry name" value="Ribosomal_bS20"/>
</dbReference>
<dbReference type="InterPro" id="IPR036510">
    <property type="entry name" value="Ribosomal_bS20_sf"/>
</dbReference>
<dbReference type="NCBIfam" id="TIGR00029">
    <property type="entry name" value="S20"/>
    <property type="match status" value="1"/>
</dbReference>
<dbReference type="PANTHER" id="PTHR33398">
    <property type="entry name" value="30S RIBOSOMAL PROTEIN S20"/>
    <property type="match status" value="1"/>
</dbReference>
<dbReference type="PANTHER" id="PTHR33398:SF1">
    <property type="entry name" value="SMALL RIBOSOMAL SUBUNIT PROTEIN BS20C"/>
    <property type="match status" value="1"/>
</dbReference>
<dbReference type="Pfam" id="PF01649">
    <property type="entry name" value="Ribosomal_S20p"/>
    <property type="match status" value="1"/>
</dbReference>
<dbReference type="SUPFAM" id="SSF46992">
    <property type="entry name" value="Ribosomal protein S20"/>
    <property type="match status" value="1"/>
</dbReference>
<keyword id="KW-1185">Reference proteome</keyword>
<keyword id="KW-0687">Ribonucleoprotein</keyword>
<keyword id="KW-0689">Ribosomal protein</keyword>
<keyword id="KW-0694">RNA-binding</keyword>
<keyword id="KW-0699">rRNA-binding</keyword>